<evidence type="ECO:0000255" key="1">
    <source>
        <dbReference type="HAMAP-Rule" id="MF_00248"/>
    </source>
</evidence>
<sequence>MPENKIRSTTILCVRKSGKVAIGGDGQVSMGNTVMKNTAKKIRRLYDGKILSGFAGSAADAFTLFELFEKKVQEFGGSLSRSAVELAREWRTDRMLRKLEALLIVADKEESFLISGTGDVISPDEGVIAIGSGGSYALAAAKALYDHTDLSAREIVESSMKIAANICIYTNDHITLEEIL</sequence>
<reference key="1">
    <citation type="journal article" date="2006" name="Proc. Natl. Acad. Sci. U.S.A.">
        <title>Genome reduction in Leptospira borgpetersenii reflects limited transmission potential.</title>
        <authorList>
            <person name="Bulach D.M."/>
            <person name="Zuerner R.L."/>
            <person name="Wilson P."/>
            <person name="Seemann T."/>
            <person name="McGrath A."/>
            <person name="Cullen P.A."/>
            <person name="Davis J."/>
            <person name="Johnson M."/>
            <person name="Kuczek E."/>
            <person name="Alt D.P."/>
            <person name="Peterson-Burch B."/>
            <person name="Coppel R.L."/>
            <person name="Rood J.I."/>
            <person name="Davies J.K."/>
            <person name="Adler B."/>
        </authorList>
    </citation>
    <scope>NUCLEOTIDE SEQUENCE [LARGE SCALE GENOMIC DNA]</scope>
    <source>
        <strain>L550</strain>
    </source>
</reference>
<dbReference type="EC" id="3.4.25.2" evidence="1"/>
<dbReference type="EMBL" id="CP000348">
    <property type="protein sequence ID" value="ABJ78971.1"/>
    <property type="molecule type" value="Genomic_DNA"/>
</dbReference>
<dbReference type="RefSeq" id="WP_011670162.1">
    <property type="nucleotide sequence ID" value="NC_008508.1"/>
</dbReference>
<dbReference type="SMR" id="Q051M4"/>
<dbReference type="MEROPS" id="T01.006"/>
<dbReference type="KEGG" id="lbl:LBL_1508"/>
<dbReference type="HOGENOM" id="CLU_093872_1_0_12"/>
<dbReference type="GO" id="GO:0009376">
    <property type="term" value="C:HslUV protease complex"/>
    <property type="evidence" value="ECO:0007669"/>
    <property type="project" value="UniProtKB-UniRule"/>
</dbReference>
<dbReference type="GO" id="GO:0005839">
    <property type="term" value="C:proteasome core complex"/>
    <property type="evidence" value="ECO:0007669"/>
    <property type="project" value="InterPro"/>
</dbReference>
<dbReference type="GO" id="GO:0046872">
    <property type="term" value="F:metal ion binding"/>
    <property type="evidence" value="ECO:0007669"/>
    <property type="project" value="UniProtKB-KW"/>
</dbReference>
<dbReference type="GO" id="GO:0004298">
    <property type="term" value="F:threonine-type endopeptidase activity"/>
    <property type="evidence" value="ECO:0007669"/>
    <property type="project" value="UniProtKB-KW"/>
</dbReference>
<dbReference type="GO" id="GO:0051603">
    <property type="term" value="P:proteolysis involved in protein catabolic process"/>
    <property type="evidence" value="ECO:0007669"/>
    <property type="project" value="InterPro"/>
</dbReference>
<dbReference type="CDD" id="cd01913">
    <property type="entry name" value="protease_HslV"/>
    <property type="match status" value="1"/>
</dbReference>
<dbReference type="FunFam" id="3.60.20.10:FF:000002">
    <property type="entry name" value="ATP-dependent protease subunit HslV"/>
    <property type="match status" value="1"/>
</dbReference>
<dbReference type="Gene3D" id="3.60.20.10">
    <property type="entry name" value="Glutamine Phosphoribosylpyrophosphate, subunit 1, domain 1"/>
    <property type="match status" value="1"/>
</dbReference>
<dbReference type="HAMAP" id="MF_00248">
    <property type="entry name" value="HslV"/>
    <property type="match status" value="1"/>
</dbReference>
<dbReference type="InterPro" id="IPR022281">
    <property type="entry name" value="ATP-dep_Prtase_HsIV_su"/>
</dbReference>
<dbReference type="InterPro" id="IPR029055">
    <property type="entry name" value="Ntn_hydrolases_N"/>
</dbReference>
<dbReference type="InterPro" id="IPR001353">
    <property type="entry name" value="Proteasome_sua/b"/>
</dbReference>
<dbReference type="InterPro" id="IPR023333">
    <property type="entry name" value="Proteasome_suB-type"/>
</dbReference>
<dbReference type="NCBIfam" id="TIGR03692">
    <property type="entry name" value="ATP_dep_HslV"/>
    <property type="match status" value="1"/>
</dbReference>
<dbReference type="NCBIfam" id="NF003964">
    <property type="entry name" value="PRK05456.1"/>
    <property type="match status" value="1"/>
</dbReference>
<dbReference type="PANTHER" id="PTHR32194:SF0">
    <property type="entry name" value="ATP-DEPENDENT PROTEASE SUBUNIT HSLV"/>
    <property type="match status" value="1"/>
</dbReference>
<dbReference type="PANTHER" id="PTHR32194">
    <property type="entry name" value="METALLOPROTEASE TLDD"/>
    <property type="match status" value="1"/>
</dbReference>
<dbReference type="Pfam" id="PF00227">
    <property type="entry name" value="Proteasome"/>
    <property type="match status" value="1"/>
</dbReference>
<dbReference type="PIRSF" id="PIRSF039093">
    <property type="entry name" value="HslV"/>
    <property type="match status" value="1"/>
</dbReference>
<dbReference type="SUPFAM" id="SSF56235">
    <property type="entry name" value="N-terminal nucleophile aminohydrolases (Ntn hydrolases)"/>
    <property type="match status" value="1"/>
</dbReference>
<dbReference type="PROSITE" id="PS51476">
    <property type="entry name" value="PROTEASOME_BETA_2"/>
    <property type="match status" value="1"/>
</dbReference>
<keyword id="KW-0021">Allosteric enzyme</keyword>
<keyword id="KW-0963">Cytoplasm</keyword>
<keyword id="KW-0378">Hydrolase</keyword>
<keyword id="KW-0479">Metal-binding</keyword>
<keyword id="KW-0645">Protease</keyword>
<keyword id="KW-0915">Sodium</keyword>
<keyword id="KW-0888">Threonine protease</keyword>
<protein>
    <recommendedName>
        <fullName evidence="1">ATP-dependent protease subunit HslV</fullName>
        <ecNumber evidence="1">3.4.25.2</ecNumber>
    </recommendedName>
</protein>
<accession>Q051M4</accession>
<organism>
    <name type="scientific">Leptospira borgpetersenii serovar Hardjo-bovis (strain L550)</name>
    <dbReference type="NCBI Taxonomy" id="355276"/>
    <lineage>
        <taxon>Bacteria</taxon>
        <taxon>Pseudomonadati</taxon>
        <taxon>Spirochaetota</taxon>
        <taxon>Spirochaetia</taxon>
        <taxon>Leptospirales</taxon>
        <taxon>Leptospiraceae</taxon>
        <taxon>Leptospira</taxon>
    </lineage>
</organism>
<gene>
    <name evidence="1" type="primary">hslV</name>
    <name type="ordered locus">LBL_1508</name>
</gene>
<comment type="function">
    <text evidence="1">Protease subunit of a proteasome-like degradation complex believed to be a general protein degrading machinery.</text>
</comment>
<comment type="catalytic activity">
    <reaction evidence="1">
        <text>ATP-dependent cleavage of peptide bonds with broad specificity.</text>
        <dbReference type="EC" id="3.4.25.2"/>
    </reaction>
</comment>
<comment type="activity regulation">
    <text evidence="1">Allosterically activated by HslU binding.</text>
</comment>
<comment type="subunit">
    <text evidence="1">A double ring-shaped homohexamer of HslV is capped on each side by a ring-shaped HslU homohexamer. The assembly of the HslU/HslV complex is dependent on binding of ATP.</text>
</comment>
<comment type="subcellular location">
    <subcellularLocation>
        <location evidence="1">Cytoplasm</location>
    </subcellularLocation>
</comment>
<comment type="similarity">
    <text evidence="1">Belongs to the peptidase T1B family. HslV subfamily.</text>
</comment>
<feature type="chain" id="PRO_1000012632" description="ATP-dependent protease subunit HslV">
    <location>
        <begin position="1"/>
        <end position="180"/>
    </location>
</feature>
<feature type="active site" evidence="1">
    <location>
        <position position="9"/>
    </location>
</feature>
<feature type="binding site" evidence="1">
    <location>
        <position position="164"/>
    </location>
    <ligand>
        <name>Na(+)</name>
        <dbReference type="ChEBI" id="CHEBI:29101"/>
    </ligand>
</feature>
<feature type="binding site" evidence="1">
    <location>
        <position position="167"/>
    </location>
    <ligand>
        <name>Na(+)</name>
        <dbReference type="ChEBI" id="CHEBI:29101"/>
    </ligand>
</feature>
<feature type="binding site" evidence="1">
    <location>
        <position position="170"/>
    </location>
    <ligand>
        <name>Na(+)</name>
        <dbReference type="ChEBI" id="CHEBI:29101"/>
    </ligand>
</feature>
<name>HSLV_LEPBL</name>
<proteinExistence type="inferred from homology"/>